<organism>
    <name type="scientific">Dictyostelium discoideum</name>
    <name type="common">Social amoeba</name>
    <dbReference type="NCBI Taxonomy" id="44689"/>
    <lineage>
        <taxon>Eukaryota</taxon>
        <taxon>Amoebozoa</taxon>
        <taxon>Evosea</taxon>
        <taxon>Eumycetozoa</taxon>
        <taxon>Dictyostelia</taxon>
        <taxon>Dictyosteliales</taxon>
        <taxon>Dictyosteliaceae</taxon>
        <taxon>Dictyostelium</taxon>
    </lineage>
</organism>
<proteinExistence type="inferred from homology"/>
<sequence>MKILIIFIIFIISYISGFEIPKGFGIGLVIPDAECLNYIGDPIDQQLCNSKLQNNGDRIYTTTNSQIDSQTNIKKSFEAITFLQDQCKDLLFAQFGICDIYLAPCIEVTLTPLKSISLPQRFCKSVCDRMVSNCPRLEEQMDCSNSFLFPEIGTFYDLSPYGYTIDNGTFAVPCSDPTIFFNQVSSNSSFIEICPSPLLLKNSSDPEYAANKGYSYLSPSNCVLPCPVPNYSNQKWDQLLTMSKILSTISFILSLYNVLTFGIINKKVSDPHKCTCFFSGSIALVNLCDIITYGIGYEELLCPEPGRSAKQQLDPVCGLTGAFFHLGITYCVLWSMTMGLVLYCSVKRQKWFKFNYFLIGNTTFTITTVVIAAATSKFEAGLGSIECWIRDRWYAISLFWIPCGIALLIGSFCIIAVIHEVYKTSKKSISNRNDLLQRELKPLLIVIFISGSFLYLFIFFFDIERKFGGYRSAVEDYVLCLLNGSQEECFTTGPSYVPYFLFYLVIRWFGIIFFLFYGTSNIARKIWVQNKIWKSISSSISPKSTPKSSPKNSDSKINSNSTNNNNMILNDNNDKNLNEKKAVELESIKIN</sequence>
<evidence type="ECO:0000250" key="1"/>
<evidence type="ECO:0000255" key="2"/>
<evidence type="ECO:0000256" key="3">
    <source>
        <dbReference type="SAM" id="MobiDB-lite"/>
    </source>
</evidence>
<evidence type="ECO:0000305" key="4"/>
<feature type="signal peptide" evidence="2">
    <location>
        <begin position="1"/>
        <end position="17"/>
    </location>
</feature>
<feature type="chain" id="PRO_0000371368" description="Frizzled and smoothened-like protein F">
    <location>
        <begin position="18"/>
        <end position="591"/>
    </location>
</feature>
<feature type="topological domain" description="Extracellular" evidence="2">
    <location>
        <begin position="18"/>
        <end position="244"/>
    </location>
</feature>
<feature type="transmembrane region" description="Helical; Name=1" evidence="2">
    <location>
        <begin position="245"/>
        <end position="265"/>
    </location>
</feature>
<feature type="topological domain" description="Cytoplasmic" evidence="2">
    <location>
        <begin position="266"/>
        <end position="275"/>
    </location>
</feature>
<feature type="transmembrane region" description="Helical; Name=2" evidence="2">
    <location>
        <begin position="276"/>
        <end position="296"/>
    </location>
</feature>
<feature type="topological domain" description="Extracellular" evidence="2">
    <location>
        <begin position="297"/>
        <end position="321"/>
    </location>
</feature>
<feature type="transmembrane region" description="Helical; Name=3" evidence="2">
    <location>
        <begin position="322"/>
        <end position="342"/>
    </location>
</feature>
<feature type="topological domain" description="Cytoplasmic" evidence="2">
    <location>
        <begin position="343"/>
        <end position="353"/>
    </location>
</feature>
<feature type="transmembrane region" description="Helical; Name=4" evidence="2">
    <location>
        <begin position="354"/>
        <end position="374"/>
    </location>
</feature>
<feature type="topological domain" description="Extracellular" evidence="2">
    <location>
        <begin position="375"/>
        <end position="397"/>
    </location>
</feature>
<feature type="transmembrane region" description="Helical; Name=5" evidence="2">
    <location>
        <begin position="398"/>
        <end position="418"/>
    </location>
</feature>
<feature type="topological domain" description="Cytoplasmic" evidence="2">
    <location>
        <begin position="419"/>
        <end position="442"/>
    </location>
</feature>
<feature type="transmembrane region" description="Helical; Name=6" evidence="2">
    <location>
        <begin position="443"/>
        <end position="463"/>
    </location>
</feature>
<feature type="topological domain" description="Extracellular" evidence="2">
    <location>
        <begin position="464"/>
        <end position="495"/>
    </location>
</feature>
<feature type="transmembrane region" description="Helical; Name=7" evidence="2">
    <location>
        <begin position="496"/>
        <end position="516"/>
    </location>
</feature>
<feature type="topological domain" description="Cytoplasmic" evidence="2">
    <location>
        <begin position="517"/>
        <end position="591"/>
    </location>
</feature>
<feature type="domain" description="FZ">
    <location>
        <begin position="30"/>
        <end position="177"/>
    </location>
</feature>
<feature type="region of interest" description="Disordered" evidence="3">
    <location>
        <begin position="538"/>
        <end position="573"/>
    </location>
</feature>
<feature type="compositionally biased region" description="Low complexity" evidence="3">
    <location>
        <begin position="538"/>
        <end position="571"/>
    </location>
</feature>
<feature type="glycosylation site" description="N-linked (GlcNAc...) asparagine" evidence="2">
    <location>
        <position position="167"/>
    </location>
</feature>
<feature type="glycosylation site" description="N-linked (GlcNAc...) asparagine" evidence="2">
    <location>
        <position position="187"/>
    </location>
</feature>
<feature type="glycosylation site" description="N-linked (GlcNAc...) asparagine" evidence="2">
    <location>
        <position position="202"/>
    </location>
</feature>
<feature type="glycosylation site" description="N-linked (GlcNAc...) asparagine" evidence="2">
    <location>
        <position position="230"/>
    </location>
</feature>
<feature type="glycosylation site" description="N-linked (GlcNAc...) asparagine" evidence="2">
    <location>
        <position position="483"/>
    </location>
</feature>
<feature type="disulfide bond" evidence="1">
    <location>
        <begin position="35"/>
        <end position="105"/>
    </location>
</feature>
<feature type="disulfide bond" evidence="1">
    <location>
        <begin position="48"/>
        <end position="98"/>
    </location>
</feature>
<feature type="disulfide bond" evidence="1">
    <location>
        <begin position="123"/>
        <end position="174"/>
    </location>
</feature>
<name>FSLF_DICDI</name>
<gene>
    <name type="primary">fslF</name>
    <name type="ORF">DDB_0231315</name>
</gene>
<keyword id="KW-1015">Disulfide bond</keyword>
<keyword id="KW-0325">Glycoprotein</keyword>
<keyword id="KW-0472">Membrane</keyword>
<keyword id="KW-0675">Receptor</keyword>
<keyword id="KW-1185">Reference proteome</keyword>
<keyword id="KW-0732">Signal</keyword>
<keyword id="KW-0812">Transmembrane</keyword>
<keyword id="KW-1133">Transmembrane helix</keyword>
<protein>
    <recommendedName>
        <fullName>Frizzled and smoothened-like protein F</fullName>
    </recommendedName>
</protein>
<accession>Q54J77</accession>
<dbReference type="EMBL" id="AAFI02000109">
    <property type="protein sequence ID" value="EAL63308.1"/>
    <property type="molecule type" value="Genomic_DNA"/>
</dbReference>
<dbReference type="RefSeq" id="XP_636810.1">
    <property type="nucleotide sequence ID" value="XM_631718.1"/>
</dbReference>
<dbReference type="FunCoup" id="Q54J77">
    <property type="interactions" value="20"/>
</dbReference>
<dbReference type="GlyCosmos" id="Q54J77">
    <property type="glycosylation" value="5 sites, No reported glycans"/>
</dbReference>
<dbReference type="GlyGen" id="Q54J77">
    <property type="glycosylation" value="5 sites"/>
</dbReference>
<dbReference type="PaxDb" id="44689-DDB0231315"/>
<dbReference type="EnsemblProtists" id="EAL63308">
    <property type="protein sequence ID" value="EAL63308"/>
    <property type="gene ID" value="DDB_G0288253"/>
</dbReference>
<dbReference type="GeneID" id="8626527"/>
<dbReference type="KEGG" id="ddi:DDB_G0288253"/>
<dbReference type="dictyBase" id="DDB_G0288253">
    <property type="gene designation" value="fslF"/>
</dbReference>
<dbReference type="VEuPathDB" id="AmoebaDB:DDB_G0288253"/>
<dbReference type="eggNOG" id="ENOG502T166">
    <property type="taxonomic scope" value="Eukaryota"/>
</dbReference>
<dbReference type="HOGENOM" id="CLU_030318_0_0_1"/>
<dbReference type="InParanoid" id="Q54J77"/>
<dbReference type="OMA" id="VAYGCHG"/>
<dbReference type="PhylomeDB" id="Q54J77"/>
<dbReference type="PRO" id="PR:Q54J77"/>
<dbReference type="Proteomes" id="UP000002195">
    <property type="component" value="Chromosome 5"/>
</dbReference>
<dbReference type="GO" id="GO:0016020">
    <property type="term" value="C:membrane"/>
    <property type="evidence" value="ECO:0007669"/>
    <property type="project" value="UniProtKB-SubCell"/>
</dbReference>
<dbReference type="GO" id="GO:0004930">
    <property type="term" value="F:G protein-coupled receptor activity"/>
    <property type="evidence" value="ECO:0007669"/>
    <property type="project" value="InterPro"/>
</dbReference>
<dbReference type="CDD" id="cd07066">
    <property type="entry name" value="CRD_FZ"/>
    <property type="match status" value="1"/>
</dbReference>
<dbReference type="Gene3D" id="1.10.2000.10">
    <property type="entry name" value="Frizzled cysteine-rich domain"/>
    <property type="match status" value="1"/>
</dbReference>
<dbReference type="Gene3D" id="1.20.1070.10">
    <property type="entry name" value="Rhodopsin 7-helix transmembrane proteins"/>
    <property type="match status" value="1"/>
</dbReference>
<dbReference type="InterPro" id="IPR036790">
    <property type="entry name" value="Frizzled_dom_sf"/>
</dbReference>
<dbReference type="InterPro" id="IPR000832">
    <property type="entry name" value="GPCR_2_secretin-like"/>
</dbReference>
<dbReference type="InterPro" id="IPR050949">
    <property type="entry name" value="GPCR_Fz/Smo-like"/>
</dbReference>
<dbReference type="PANTHER" id="PTHR31787:SF1">
    <property type="entry name" value="FRIZZLED AND SMOOTHENED-LIKE PROTEIN B-RELATED"/>
    <property type="match status" value="1"/>
</dbReference>
<dbReference type="PANTHER" id="PTHR31787">
    <property type="entry name" value="G-PROTEIN-COUPLED RECEPTOR GPCR FAMILY PROTEIN"/>
    <property type="match status" value="1"/>
</dbReference>
<dbReference type="Pfam" id="PF00002">
    <property type="entry name" value="7tm_2"/>
    <property type="match status" value="1"/>
</dbReference>
<reference key="1">
    <citation type="journal article" date="2005" name="Nature">
        <title>The genome of the social amoeba Dictyostelium discoideum.</title>
        <authorList>
            <person name="Eichinger L."/>
            <person name="Pachebat J.A."/>
            <person name="Gloeckner G."/>
            <person name="Rajandream M.A."/>
            <person name="Sucgang R."/>
            <person name="Berriman M."/>
            <person name="Song J."/>
            <person name="Olsen R."/>
            <person name="Szafranski K."/>
            <person name="Xu Q."/>
            <person name="Tunggal B."/>
            <person name="Kummerfeld S."/>
            <person name="Madera M."/>
            <person name="Konfortov B.A."/>
            <person name="Rivero F."/>
            <person name="Bankier A.T."/>
            <person name="Lehmann R."/>
            <person name="Hamlin N."/>
            <person name="Davies R."/>
            <person name="Gaudet P."/>
            <person name="Fey P."/>
            <person name="Pilcher K."/>
            <person name="Chen G."/>
            <person name="Saunders D."/>
            <person name="Sodergren E.J."/>
            <person name="Davis P."/>
            <person name="Kerhornou A."/>
            <person name="Nie X."/>
            <person name="Hall N."/>
            <person name="Anjard C."/>
            <person name="Hemphill L."/>
            <person name="Bason N."/>
            <person name="Farbrother P."/>
            <person name="Desany B."/>
            <person name="Just E."/>
            <person name="Morio T."/>
            <person name="Rost R."/>
            <person name="Churcher C.M."/>
            <person name="Cooper J."/>
            <person name="Haydock S."/>
            <person name="van Driessche N."/>
            <person name="Cronin A."/>
            <person name="Goodhead I."/>
            <person name="Muzny D.M."/>
            <person name="Mourier T."/>
            <person name="Pain A."/>
            <person name="Lu M."/>
            <person name="Harper D."/>
            <person name="Lindsay R."/>
            <person name="Hauser H."/>
            <person name="James K.D."/>
            <person name="Quiles M."/>
            <person name="Madan Babu M."/>
            <person name="Saito T."/>
            <person name="Buchrieser C."/>
            <person name="Wardroper A."/>
            <person name="Felder M."/>
            <person name="Thangavelu M."/>
            <person name="Johnson D."/>
            <person name="Knights A."/>
            <person name="Loulseged H."/>
            <person name="Mungall K.L."/>
            <person name="Oliver K."/>
            <person name="Price C."/>
            <person name="Quail M.A."/>
            <person name="Urushihara H."/>
            <person name="Hernandez J."/>
            <person name="Rabbinowitsch E."/>
            <person name="Steffen D."/>
            <person name="Sanders M."/>
            <person name="Ma J."/>
            <person name="Kohara Y."/>
            <person name="Sharp S."/>
            <person name="Simmonds M.N."/>
            <person name="Spiegler S."/>
            <person name="Tivey A."/>
            <person name="Sugano S."/>
            <person name="White B."/>
            <person name="Walker D."/>
            <person name="Woodward J.R."/>
            <person name="Winckler T."/>
            <person name="Tanaka Y."/>
            <person name="Shaulsky G."/>
            <person name="Schleicher M."/>
            <person name="Weinstock G.M."/>
            <person name="Rosenthal A."/>
            <person name="Cox E.C."/>
            <person name="Chisholm R.L."/>
            <person name="Gibbs R.A."/>
            <person name="Loomis W.F."/>
            <person name="Platzer M."/>
            <person name="Kay R.R."/>
            <person name="Williams J.G."/>
            <person name="Dear P.H."/>
            <person name="Noegel A.A."/>
            <person name="Barrell B.G."/>
            <person name="Kuspa A."/>
        </authorList>
    </citation>
    <scope>NUCLEOTIDE SEQUENCE [LARGE SCALE GENOMIC DNA]</scope>
    <source>
        <strain>AX4</strain>
    </source>
</reference>
<reference key="2">
    <citation type="journal article" date="2006" name="Eur. J. Cell Biol.">
        <title>The Dictyostelium repertoire of seven transmembrane domain receptors.</title>
        <authorList>
            <person name="Prabhu Y."/>
            <person name="Eichinger L."/>
        </authorList>
    </citation>
    <scope>NOMENCLATURE</scope>
</reference>
<comment type="subcellular location">
    <subcellularLocation>
        <location evidence="4">Membrane</location>
        <topology evidence="4">Multi-pass membrane protein</topology>
    </subcellularLocation>
</comment>
<comment type="similarity">
    <text evidence="4">Belongs to the G-protein coupled receptor Fz/Smo family.</text>
</comment>